<feature type="chain" id="PRO_0000314050" description="Serine/threonine-protein kinase Nek6">
    <location>
        <begin position="1"/>
        <end position="534"/>
    </location>
</feature>
<feature type="domain" description="Protein kinase" evidence="1">
    <location>
        <begin position="4"/>
        <end position="257"/>
    </location>
</feature>
<feature type="region of interest" description="Disordered" evidence="3">
    <location>
        <begin position="278"/>
        <end position="306"/>
    </location>
</feature>
<feature type="region of interest" description="Disordered" evidence="3">
    <location>
        <begin position="425"/>
        <end position="449"/>
    </location>
</feature>
<feature type="active site" description="Proton acceptor" evidence="1 2">
    <location>
        <position position="129"/>
    </location>
</feature>
<feature type="binding site" evidence="1">
    <location>
        <begin position="10"/>
        <end position="18"/>
    </location>
    <ligand>
        <name>ATP</name>
        <dbReference type="ChEBI" id="CHEBI:30616"/>
    </ligand>
</feature>
<feature type="binding site" evidence="1">
    <location>
        <position position="33"/>
    </location>
    <ligand>
        <name>ATP</name>
        <dbReference type="ChEBI" id="CHEBI:30616"/>
    </ligand>
</feature>
<protein>
    <recommendedName>
        <fullName evidence="7">Serine/threonine-protein kinase Nek6</fullName>
        <ecNumber evidence="7">2.7.11.34</ecNumber>
    </recommendedName>
    <alternativeName>
        <fullName evidence="6">NimA-related protein kinase 6</fullName>
    </alternativeName>
    <alternativeName>
        <fullName evidence="6">OsNek6</fullName>
    </alternativeName>
</protein>
<dbReference type="EC" id="2.7.11.34" evidence="7"/>
<dbReference type="EMBL" id="AP005640">
    <property type="protein sequence ID" value="BAD17425.1"/>
    <property type="status" value="ALT_SEQ"/>
    <property type="molecule type" value="Genomic_DNA"/>
</dbReference>
<dbReference type="EMBL" id="AP008208">
    <property type="protein sequence ID" value="BAF09199.2"/>
    <property type="status" value="ALT_SEQ"/>
    <property type="molecule type" value="Genomic_DNA"/>
</dbReference>
<dbReference type="EMBL" id="AP014958">
    <property type="protein sequence ID" value="BAS79503.1"/>
    <property type="status" value="ALT_SEQ"/>
    <property type="molecule type" value="Genomic_DNA"/>
</dbReference>
<dbReference type="EMBL" id="CM000139">
    <property type="protein sequence ID" value="EEE57277.1"/>
    <property type="molecule type" value="Genomic_DNA"/>
</dbReference>
<dbReference type="RefSeq" id="XP_015626426.1">
    <property type="nucleotide sequence ID" value="XM_015770940.1"/>
</dbReference>
<dbReference type="SMR" id="Q6YY75"/>
<dbReference type="FunCoup" id="Q6YY75">
    <property type="interactions" value="926"/>
</dbReference>
<dbReference type="STRING" id="39947.Q6YY75"/>
<dbReference type="PaxDb" id="39947-Q6YY75"/>
<dbReference type="EnsemblPlants" id="Os02t0590800-01">
    <property type="protein sequence ID" value="Os02t0590800-01"/>
    <property type="gene ID" value="Os02g0590800"/>
</dbReference>
<dbReference type="Gramene" id="Os02t0590800-01">
    <property type="protein sequence ID" value="Os02t0590800-01"/>
    <property type="gene ID" value="Os02g0590800"/>
</dbReference>
<dbReference type="KEGG" id="dosa:Os02g0590800"/>
<dbReference type="eggNOG" id="KOG0589">
    <property type="taxonomic scope" value="Eukaryota"/>
</dbReference>
<dbReference type="HOGENOM" id="CLU_000288_128_3_1"/>
<dbReference type="InParanoid" id="Q6YY75"/>
<dbReference type="OrthoDB" id="248923at2759"/>
<dbReference type="Proteomes" id="UP000000763">
    <property type="component" value="Chromosome 2"/>
</dbReference>
<dbReference type="Proteomes" id="UP000007752">
    <property type="component" value="Chromosome 2"/>
</dbReference>
<dbReference type="Proteomes" id="UP000059680">
    <property type="component" value="Chromosome 2"/>
</dbReference>
<dbReference type="GO" id="GO:0055028">
    <property type="term" value="C:cortical microtubule"/>
    <property type="evidence" value="ECO:0000318"/>
    <property type="project" value="GO_Central"/>
</dbReference>
<dbReference type="GO" id="GO:0005737">
    <property type="term" value="C:cytoplasm"/>
    <property type="evidence" value="ECO:0000314"/>
    <property type="project" value="UniProtKB"/>
</dbReference>
<dbReference type="GO" id="GO:0005524">
    <property type="term" value="F:ATP binding"/>
    <property type="evidence" value="ECO:0007669"/>
    <property type="project" value="UniProtKB-KW"/>
</dbReference>
<dbReference type="GO" id="GO:0106310">
    <property type="term" value="F:protein serine kinase activity"/>
    <property type="evidence" value="ECO:0007669"/>
    <property type="project" value="RHEA"/>
</dbReference>
<dbReference type="GO" id="GO:0004674">
    <property type="term" value="F:protein serine/threonine kinase activity"/>
    <property type="evidence" value="ECO:0000318"/>
    <property type="project" value="GO_Central"/>
</dbReference>
<dbReference type="GO" id="GO:0007017">
    <property type="term" value="P:microtubule-based process"/>
    <property type="evidence" value="ECO:0000318"/>
    <property type="project" value="GO_Central"/>
</dbReference>
<dbReference type="CDD" id="cd08215">
    <property type="entry name" value="STKc_Nek"/>
    <property type="match status" value="1"/>
</dbReference>
<dbReference type="FunFam" id="1.10.510.10:FF:000702">
    <property type="entry name" value="Serine/threonine-protein kinase Nek6"/>
    <property type="match status" value="1"/>
</dbReference>
<dbReference type="FunFam" id="3.30.200.20:FF:000497">
    <property type="entry name" value="Serine/threonine-protein kinase Nek6"/>
    <property type="match status" value="1"/>
</dbReference>
<dbReference type="Gene3D" id="3.30.200.20">
    <property type="entry name" value="Phosphorylase Kinase, domain 1"/>
    <property type="match status" value="1"/>
</dbReference>
<dbReference type="Gene3D" id="1.10.510.10">
    <property type="entry name" value="Transferase(Phosphotransferase) domain 1"/>
    <property type="match status" value="1"/>
</dbReference>
<dbReference type="InterPro" id="IPR011009">
    <property type="entry name" value="Kinase-like_dom_sf"/>
</dbReference>
<dbReference type="InterPro" id="IPR050660">
    <property type="entry name" value="NEK_Ser/Thr_kinase"/>
</dbReference>
<dbReference type="InterPro" id="IPR000719">
    <property type="entry name" value="Prot_kinase_dom"/>
</dbReference>
<dbReference type="InterPro" id="IPR017441">
    <property type="entry name" value="Protein_kinase_ATP_BS"/>
</dbReference>
<dbReference type="InterPro" id="IPR008271">
    <property type="entry name" value="Ser/Thr_kinase_AS"/>
</dbReference>
<dbReference type="PANTHER" id="PTHR43671">
    <property type="entry name" value="SERINE/THREONINE-PROTEIN KINASE NEK"/>
    <property type="match status" value="1"/>
</dbReference>
<dbReference type="PANTHER" id="PTHR43671:SF107">
    <property type="entry name" value="SERINE_THREONINE-PROTEIN KINASE NEK6"/>
    <property type="match status" value="1"/>
</dbReference>
<dbReference type="Pfam" id="PF00069">
    <property type="entry name" value="Pkinase"/>
    <property type="match status" value="1"/>
</dbReference>
<dbReference type="SMART" id="SM00220">
    <property type="entry name" value="S_TKc"/>
    <property type="match status" value="1"/>
</dbReference>
<dbReference type="SUPFAM" id="SSF56112">
    <property type="entry name" value="Protein kinase-like (PK-like)"/>
    <property type="match status" value="1"/>
</dbReference>
<dbReference type="PROSITE" id="PS00107">
    <property type="entry name" value="PROTEIN_KINASE_ATP"/>
    <property type="match status" value="1"/>
</dbReference>
<dbReference type="PROSITE" id="PS50011">
    <property type="entry name" value="PROTEIN_KINASE_DOM"/>
    <property type="match status" value="1"/>
</dbReference>
<dbReference type="PROSITE" id="PS00108">
    <property type="entry name" value="PROTEIN_KINASE_ST"/>
    <property type="match status" value="1"/>
</dbReference>
<sequence length="534" mass="59497">MEQYEVVEQIGRGAYGSAYLVVHKGERKRYVMKKIRLSKQNDKFQRTAYQEMSLMASLSNPYIVEYKDGWVDEGTSACIVTSYCEGGDMAERIKKARGVLFSEERVCRWFTQLLLALDYLHCNRVLHRDLKCSNILLTKDNNIRLADFGLAKLLMEDLASTIVGTPNYMCPEILADIPYGYKSDIWSLGCCMFEILAHRPAFKAADMASLINKINRSSISPMPPIYSSSLKQIVKSMLRKNPEHRPTAGELLRHPYLQPYLAESCSCSPIYLPVKPTKSNLGDKQQSRKPGSGRKRIIKTNGSSEALETAAEQAVDTRDNSTYISDVSTVGTQDACISQVSVDPQARNKAYQNIDDLTLFQQIEENLMTITDRQIDEAIFLKAVRTSSTVDVVPVSGAIQKPNEAPIPKEELTIGVVQEQRKEVKAHTHQGSKPGTGDVPIVTEESSPKSAVKLAHSDSTPAEWDHLNIVQQRADALESLLELCAKLLKQERLEELAGVLRPFGEGAVSSRETAIWLTKSLMTPPKLEGSPKLT</sequence>
<reference key="1">
    <citation type="journal article" date="2005" name="Nature">
        <title>The map-based sequence of the rice genome.</title>
        <authorList>
            <consortium name="International rice genome sequencing project (IRGSP)"/>
        </authorList>
    </citation>
    <scope>NUCLEOTIDE SEQUENCE [LARGE SCALE GENOMIC DNA]</scope>
    <source>
        <strain>cv. Nipponbare</strain>
    </source>
</reference>
<reference key="2">
    <citation type="journal article" date="2008" name="Nucleic Acids Res.">
        <title>The rice annotation project database (RAP-DB): 2008 update.</title>
        <authorList>
            <consortium name="The rice annotation project (RAP)"/>
        </authorList>
    </citation>
    <scope>GENOME REANNOTATION</scope>
    <source>
        <strain>cv. Nipponbare</strain>
    </source>
</reference>
<reference key="3">
    <citation type="journal article" date="2013" name="Rice">
        <title>Improvement of the Oryza sativa Nipponbare reference genome using next generation sequence and optical map data.</title>
        <authorList>
            <person name="Kawahara Y."/>
            <person name="de la Bastide M."/>
            <person name="Hamilton J.P."/>
            <person name="Kanamori H."/>
            <person name="McCombie W.R."/>
            <person name="Ouyang S."/>
            <person name="Schwartz D.C."/>
            <person name="Tanaka T."/>
            <person name="Wu J."/>
            <person name="Zhou S."/>
            <person name="Childs K.L."/>
            <person name="Davidson R.M."/>
            <person name="Lin H."/>
            <person name="Quesada-Ocampo L."/>
            <person name="Vaillancourt B."/>
            <person name="Sakai H."/>
            <person name="Lee S.S."/>
            <person name="Kim J."/>
            <person name="Numa H."/>
            <person name="Itoh T."/>
            <person name="Buell C.R."/>
            <person name="Matsumoto T."/>
        </authorList>
    </citation>
    <scope>GENOME REANNOTATION</scope>
    <source>
        <strain>cv. Nipponbare</strain>
    </source>
</reference>
<reference key="4">
    <citation type="journal article" date="2005" name="PLoS Biol.">
        <title>The genomes of Oryza sativa: a history of duplications.</title>
        <authorList>
            <person name="Yu J."/>
            <person name="Wang J."/>
            <person name="Lin W."/>
            <person name="Li S."/>
            <person name="Li H."/>
            <person name="Zhou J."/>
            <person name="Ni P."/>
            <person name="Dong W."/>
            <person name="Hu S."/>
            <person name="Zeng C."/>
            <person name="Zhang J."/>
            <person name="Zhang Y."/>
            <person name="Li R."/>
            <person name="Xu Z."/>
            <person name="Li S."/>
            <person name="Li X."/>
            <person name="Zheng H."/>
            <person name="Cong L."/>
            <person name="Lin L."/>
            <person name="Yin J."/>
            <person name="Geng J."/>
            <person name="Li G."/>
            <person name="Shi J."/>
            <person name="Liu J."/>
            <person name="Lv H."/>
            <person name="Li J."/>
            <person name="Wang J."/>
            <person name="Deng Y."/>
            <person name="Ran L."/>
            <person name="Shi X."/>
            <person name="Wang X."/>
            <person name="Wu Q."/>
            <person name="Li C."/>
            <person name="Ren X."/>
            <person name="Wang J."/>
            <person name="Wang X."/>
            <person name="Li D."/>
            <person name="Liu D."/>
            <person name="Zhang X."/>
            <person name="Ji Z."/>
            <person name="Zhao W."/>
            <person name="Sun Y."/>
            <person name="Zhang Z."/>
            <person name="Bao J."/>
            <person name="Han Y."/>
            <person name="Dong L."/>
            <person name="Ji J."/>
            <person name="Chen P."/>
            <person name="Wu S."/>
            <person name="Liu J."/>
            <person name="Xiao Y."/>
            <person name="Bu D."/>
            <person name="Tan J."/>
            <person name="Yang L."/>
            <person name="Ye C."/>
            <person name="Zhang J."/>
            <person name="Xu J."/>
            <person name="Zhou Y."/>
            <person name="Yu Y."/>
            <person name="Zhang B."/>
            <person name="Zhuang S."/>
            <person name="Wei H."/>
            <person name="Liu B."/>
            <person name="Lei M."/>
            <person name="Yu H."/>
            <person name="Li Y."/>
            <person name="Xu H."/>
            <person name="Wei S."/>
            <person name="He X."/>
            <person name="Fang L."/>
            <person name="Zhang Z."/>
            <person name="Zhang Y."/>
            <person name="Huang X."/>
            <person name="Su Z."/>
            <person name="Tong W."/>
            <person name="Li J."/>
            <person name="Tong Z."/>
            <person name="Li S."/>
            <person name="Ye J."/>
            <person name="Wang L."/>
            <person name="Fang L."/>
            <person name="Lei T."/>
            <person name="Chen C.-S."/>
            <person name="Chen H.-C."/>
            <person name="Xu Z."/>
            <person name="Li H."/>
            <person name="Huang H."/>
            <person name="Zhang F."/>
            <person name="Xu H."/>
            <person name="Li N."/>
            <person name="Zhao C."/>
            <person name="Li S."/>
            <person name="Dong L."/>
            <person name="Huang Y."/>
            <person name="Li L."/>
            <person name="Xi Y."/>
            <person name="Qi Q."/>
            <person name="Li W."/>
            <person name="Zhang B."/>
            <person name="Hu W."/>
            <person name="Zhang Y."/>
            <person name="Tian X."/>
            <person name="Jiao Y."/>
            <person name="Liang X."/>
            <person name="Jin J."/>
            <person name="Gao L."/>
            <person name="Zheng W."/>
            <person name="Hao B."/>
            <person name="Liu S.-M."/>
            <person name="Wang W."/>
            <person name="Yuan L."/>
            <person name="Cao M."/>
            <person name="McDermott J."/>
            <person name="Samudrala R."/>
            <person name="Wang J."/>
            <person name="Wong G.K.-S."/>
            <person name="Yang H."/>
        </authorList>
    </citation>
    <scope>NUCLEOTIDE SEQUENCE [LARGE SCALE GENOMIC DNA]</scope>
    <source>
        <strain>cv. Nipponbare</strain>
    </source>
</reference>
<reference key="5">
    <citation type="journal article" date="2007" name="Plant J.">
        <title>Members of the plant NIMA-related kinases are involved in organ development and vascularization in poplar, Arabidopsis and rice.</title>
        <authorList>
            <person name="Vigneault F."/>
            <person name="Lachance D."/>
            <person name="Cloutier M."/>
            <person name="Pelletier G."/>
            <person name="Levasseur C."/>
            <person name="Seguin A."/>
        </authorList>
    </citation>
    <scope>FUNCTION</scope>
    <scope>GENE FAMILY</scope>
    <scope>NOMENCLATURE</scope>
</reference>
<reference key="6">
    <citation type="journal article" date="2009" name="Plant Cell Physiol.">
        <title>Cytoplasmic male sterility-related protein kinase, OsNek3, is regulated downstream of mitochondrial protein phosphatase 2C, DCW11.</title>
        <authorList>
            <person name="Fujii S."/>
            <person name="Yamada M."/>
            <person name="Toriyama K."/>
        </authorList>
    </citation>
    <scope>TISSUE SPECIFICITY</scope>
</reference>
<reference key="7">
    <citation type="journal article" date="2011" name="Plant Physiol.">
        <title>The SINA E3 ligase OsDIS1 negatively regulates drought response in rice.</title>
        <authorList>
            <person name="Ning Y."/>
            <person name="Jantasuriyarat C."/>
            <person name="Zhao Q."/>
            <person name="Zhang H."/>
            <person name="Chen S."/>
            <person name="Liu J."/>
            <person name="Liu L."/>
            <person name="Tang S."/>
            <person name="Park C.H."/>
            <person name="Wang X."/>
            <person name="Liu X."/>
            <person name="Dai L."/>
            <person name="Xie Q."/>
            <person name="Wang G.L."/>
        </authorList>
    </citation>
    <scope>INTERACTION WITH DIS1</scope>
    <scope>SUBCELLULAR LOCATION</scope>
    <scope>UBIQUITINATION</scope>
</reference>
<gene>
    <name evidence="6" type="primary">NEK6</name>
    <name evidence="10" type="ordered locus">Os02g0590800</name>
    <name evidence="7" type="ordered locus">LOC_Os02g37830</name>
    <name evidence="11" type="ORF">OsJ_07328</name>
    <name evidence="9" type="ORF">OSJNBa0006O15.28</name>
</gene>
<accession>Q6YY75</accession>
<accession>A0A0P0VL88</accession>
<accession>B9F0T5</accession>
<accession>Q0DZY9</accession>
<proteinExistence type="evidence at protein level"/>
<keyword id="KW-0067">ATP-binding</keyword>
<keyword id="KW-0963">Cytoplasm</keyword>
<keyword id="KW-0418">Kinase</keyword>
<keyword id="KW-0547">Nucleotide-binding</keyword>
<keyword id="KW-1185">Reference proteome</keyword>
<keyword id="KW-0723">Serine/threonine-protein kinase</keyword>
<keyword id="KW-0808">Transferase</keyword>
<keyword id="KW-0832">Ubl conjugation</keyword>
<organism>
    <name type="scientific">Oryza sativa subsp. japonica</name>
    <name type="common">Rice</name>
    <dbReference type="NCBI Taxonomy" id="39947"/>
    <lineage>
        <taxon>Eukaryota</taxon>
        <taxon>Viridiplantae</taxon>
        <taxon>Streptophyta</taxon>
        <taxon>Embryophyta</taxon>
        <taxon>Tracheophyta</taxon>
        <taxon>Spermatophyta</taxon>
        <taxon>Magnoliopsida</taxon>
        <taxon>Liliopsida</taxon>
        <taxon>Poales</taxon>
        <taxon>Poaceae</taxon>
        <taxon>BOP clade</taxon>
        <taxon>Oryzoideae</taxon>
        <taxon>Oryzeae</taxon>
        <taxon>Oryzinae</taxon>
        <taxon>Oryza</taxon>
        <taxon>Oryza sativa</taxon>
    </lineage>
</organism>
<name>NEK6_ORYSJ</name>
<comment type="function">
    <text evidence="8">May be involved in plant development processes.</text>
</comment>
<comment type="catalytic activity">
    <reaction evidence="7">
        <text>L-seryl-[protein] + ATP = O-phospho-L-seryl-[protein] + ADP + H(+)</text>
        <dbReference type="Rhea" id="RHEA:17989"/>
        <dbReference type="Rhea" id="RHEA-COMP:9863"/>
        <dbReference type="Rhea" id="RHEA-COMP:11604"/>
        <dbReference type="ChEBI" id="CHEBI:15378"/>
        <dbReference type="ChEBI" id="CHEBI:29999"/>
        <dbReference type="ChEBI" id="CHEBI:30616"/>
        <dbReference type="ChEBI" id="CHEBI:83421"/>
        <dbReference type="ChEBI" id="CHEBI:456216"/>
        <dbReference type="EC" id="2.7.11.34"/>
    </reaction>
</comment>
<comment type="catalytic activity">
    <reaction evidence="7">
        <text>L-threonyl-[protein] + ATP = O-phospho-L-threonyl-[protein] + ADP + H(+)</text>
        <dbReference type="Rhea" id="RHEA:46608"/>
        <dbReference type="Rhea" id="RHEA-COMP:11060"/>
        <dbReference type="Rhea" id="RHEA-COMP:11605"/>
        <dbReference type="ChEBI" id="CHEBI:15378"/>
        <dbReference type="ChEBI" id="CHEBI:30013"/>
        <dbReference type="ChEBI" id="CHEBI:30616"/>
        <dbReference type="ChEBI" id="CHEBI:61977"/>
        <dbReference type="ChEBI" id="CHEBI:456216"/>
        <dbReference type="EC" id="2.7.11.34"/>
    </reaction>
</comment>
<comment type="subunit">
    <text evidence="5">Interacts with DIS1.</text>
</comment>
<comment type="subcellular location">
    <subcellularLocation>
        <location evidence="5">Cytoplasm</location>
    </subcellularLocation>
    <text evidence="5">Localizes in cytoplasmic spots associated with tubulin.</text>
</comment>
<comment type="tissue specificity">
    <text evidence="4">Expressed in anthers, pistils and leaves.</text>
</comment>
<comment type="PTM">
    <text evidence="5">Ubiquitinated by the E3 ligase DIS1. Ubiquitination of NEK6 leads to its degradation via the 26S proteasome-dependent pathway.</text>
</comment>
<comment type="similarity">
    <text evidence="7">Belongs to the protein kinase superfamily. NEK Ser/Thr protein kinase family. NIMA subfamily.</text>
</comment>
<comment type="sequence caution" evidence="7">
    <conflict type="erroneous gene model prediction">
        <sequence resource="EMBL-CDS" id="BAD17425"/>
    </conflict>
</comment>
<comment type="sequence caution" evidence="7">
    <conflict type="erroneous gene model prediction">
        <sequence resource="EMBL-CDS" id="BAF09199"/>
    </conflict>
</comment>
<comment type="sequence caution" evidence="7">
    <conflict type="erroneous gene model prediction">
        <sequence resource="EMBL-CDS" id="BAS79503"/>
    </conflict>
</comment>
<evidence type="ECO:0000255" key="1">
    <source>
        <dbReference type="PROSITE-ProRule" id="PRU00159"/>
    </source>
</evidence>
<evidence type="ECO:0000255" key="2">
    <source>
        <dbReference type="PROSITE-ProRule" id="PRU10027"/>
    </source>
</evidence>
<evidence type="ECO:0000256" key="3">
    <source>
        <dbReference type="SAM" id="MobiDB-lite"/>
    </source>
</evidence>
<evidence type="ECO:0000269" key="4">
    <source>
    </source>
</evidence>
<evidence type="ECO:0000269" key="5">
    <source>
    </source>
</evidence>
<evidence type="ECO:0000303" key="6">
    <source>
    </source>
</evidence>
<evidence type="ECO:0000305" key="7"/>
<evidence type="ECO:0000305" key="8">
    <source>
    </source>
</evidence>
<evidence type="ECO:0000312" key="9">
    <source>
        <dbReference type="EMBL" id="BAD17425.1"/>
    </source>
</evidence>
<evidence type="ECO:0000312" key="10">
    <source>
        <dbReference type="EMBL" id="BAS79503.1"/>
    </source>
</evidence>
<evidence type="ECO:0000312" key="11">
    <source>
        <dbReference type="EMBL" id="EEE57277.1"/>
    </source>
</evidence>